<reference key="1">
    <citation type="journal article" date="2007" name="Nat. Biotechnol.">
        <title>Complete genome sequence of the myxobacterium Sorangium cellulosum.</title>
        <authorList>
            <person name="Schneiker S."/>
            <person name="Perlova O."/>
            <person name="Kaiser O."/>
            <person name="Gerth K."/>
            <person name="Alici A."/>
            <person name="Altmeyer M.O."/>
            <person name="Bartels D."/>
            <person name="Bekel T."/>
            <person name="Beyer S."/>
            <person name="Bode E."/>
            <person name="Bode H.B."/>
            <person name="Bolten C.J."/>
            <person name="Choudhuri J.V."/>
            <person name="Doss S."/>
            <person name="Elnakady Y.A."/>
            <person name="Frank B."/>
            <person name="Gaigalat L."/>
            <person name="Goesmann A."/>
            <person name="Groeger C."/>
            <person name="Gross F."/>
            <person name="Jelsbak L."/>
            <person name="Jelsbak L."/>
            <person name="Kalinowski J."/>
            <person name="Kegler C."/>
            <person name="Knauber T."/>
            <person name="Konietzny S."/>
            <person name="Kopp M."/>
            <person name="Krause L."/>
            <person name="Krug D."/>
            <person name="Linke B."/>
            <person name="Mahmud T."/>
            <person name="Martinez-Arias R."/>
            <person name="McHardy A.C."/>
            <person name="Merai M."/>
            <person name="Meyer F."/>
            <person name="Mormann S."/>
            <person name="Munoz-Dorado J."/>
            <person name="Perez J."/>
            <person name="Pradella S."/>
            <person name="Rachid S."/>
            <person name="Raddatz G."/>
            <person name="Rosenau F."/>
            <person name="Rueckert C."/>
            <person name="Sasse F."/>
            <person name="Scharfe M."/>
            <person name="Schuster S.C."/>
            <person name="Suen G."/>
            <person name="Treuner-Lange A."/>
            <person name="Velicer G.J."/>
            <person name="Vorholter F.-J."/>
            <person name="Weissman K.J."/>
            <person name="Welch R.D."/>
            <person name="Wenzel S.C."/>
            <person name="Whitworth D.E."/>
            <person name="Wilhelm S."/>
            <person name="Wittmann C."/>
            <person name="Bloecker H."/>
            <person name="Puehler A."/>
            <person name="Mueller R."/>
        </authorList>
    </citation>
    <scope>NUCLEOTIDE SEQUENCE [LARGE SCALE GENOMIC DNA]</scope>
    <source>
        <strain>So ce56</strain>
    </source>
</reference>
<name>DABA2_SORC5</name>
<feature type="chain" id="PRO_0000387300" description="Probable inorganic carbon transporter subunit DabA 2">
    <location>
        <begin position="1"/>
        <end position="1018"/>
    </location>
</feature>
<feature type="binding site" evidence="1">
    <location>
        <position position="489"/>
    </location>
    <ligand>
        <name>Zn(2+)</name>
        <dbReference type="ChEBI" id="CHEBI:29105"/>
    </ligand>
</feature>
<feature type="binding site" evidence="1">
    <location>
        <position position="491"/>
    </location>
    <ligand>
        <name>Zn(2+)</name>
        <dbReference type="ChEBI" id="CHEBI:29105"/>
    </ligand>
</feature>
<feature type="binding site" evidence="1">
    <location>
        <position position="674"/>
    </location>
    <ligand>
        <name>Zn(2+)</name>
        <dbReference type="ChEBI" id="CHEBI:29105"/>
    </ligand>
</feature>
<feature type="binding site" evidence="1">
    <location>
        <position position="689"/>
    </location>
    <ligand>
        <name>Zn(2+)</name>
        <dbReference type="ChEBI" id="CHEBI:29105"/>
    </ligand>
</feature>
<dbReference type="EMBL" id="AM746676">
    <property type="protein sequence ID" value="CAN98917.1"/>
    <property type="molecule type" value="Genomic_DNA"/>
</dbReference>
<dbReference type="RefSeq" id="WP_012241356.1">
    <property type="nucleotide sequence ID" value="NC_010162.1"/>
</dbReference>
<dbReference type="STRING" id="448385.sce8745"/>
<dbReference type="KEGG" id="scl:sce8745"/>
<dbReference type="eggNOG" id="COG3002">
    <property type="taxonomic scope" value="Bacteria"/>
</dbReference>
<dbReference type="HOGENOM" id="CLU_009885_0_0_7"/>
<dbReference type="OrthoDB" id="9805101at2"/>
<dbReference type="BioCyc" id="SCEL448385:SCE_RS44825-MONOMER"/>
<dbReference type="Proteomes" id="UP000002139">
    <property type="component" value="Chromosome"/>
</dbReference>
<dbReference type="GO" id="GO:0005886">
    <property type="term" value="C:plasma membrane"/>
    <property type="evidence" value="ECO:0007669"/>
    <property type="project" value="UniProtKB-SubCell"/>
</dbReference>
<dbReference type="GO" id="GO:0008270">
    <property type="term" value="F:zinc ion binding"/>
    <property type="evidence" value="ECO:0007669"/>
    <property type="project" value="UniProtKB-UniRule"/>
</dbReference>
<dbReference type="HAMAP" id="MF_01871">
    <property type="entry name" value="DabA"/>
    <property type="match status" value="1"/>
</dbReference>
<dbReference type="InterPro" id="IPR018752">
    <property type="entry name" value="DabA"/>
</dbReference>
<dbReference type="PANTHER" id="PTHR38344:SF1">
    <property type="entry name" value="INORGANIC CARBON TRANSPORTER SUBUNIT DABA-RELATED"/>
    <property type="match status" value="1"/>
</dbReference>
<dbReference type="PANTHER" id="PTHR38344">
    <property type="entry name" value="UPF0753 PROTEIN AQ_863"/>
    <property type="match status" value="1"/>
</dbReference>
<dbReference type="Pfam" id="PF10070">
    <property type="entry name" value="DabA"/>
    <property type="match status" value="1"/>
</dbReference>
<gene>
    <name evidence="1" type="primary">dabA2</name>
    <name type="ordered locus">sce8745</name>
</gene>
<protein>
    <recommendedName>
        <fullName evidence="1">Probable inorganic carbon transporter subunit DabA 2</fullName>
    </recommendedName>
</protein>
<sequence length="1018" mass="111654">MNEPGSTFGAGEAPEERLRALLQHVGHFLPAQGPIGVFVHHNTLHAFQHLPFHDALAAASALFEAEPYLSEAEFRAHIASGRIDDQDIEAALAERFAETPDERRGPLSRIEIERLALRFPIETATQAGLGWRIAETGATRELRPDLPSGPYHRLLVYTERWLAERPHAAARLLDQGGRDPESRAALALWDACRGVPLPPTEPAEPPLVDRVGVDRSHRDLLLAITGEDPAELIDPPFIRLLGAYLDEGVAHWAMPDRAQGLFRAFRGLVLEGSRPAGAHFAGLDAELRAIGANMPPAAVAVAALRDLGVAEQRWEGYVTRVLLELPGWAGMVHRFEHTPSDRPAGAPPASLLEYLAVRLTLARYALRDVARRRLGYRGPLAGLVEHARRAARPVEPPPRSPDGDRPFRLFQLAQLAGLSVAQIQPLSAADRVWALEVLEGLDEMARRRLLHEAYEHHHRVEVLHGIAANLRRPEDERAVRSPRFQVALCIDDRCEGLRRHFEELSPRHETLGIAGFFGVPIRYRGLDDAGHASLCPVNVAPAHEIVERPREEGAALVRKARRRRWARFVHALGHGTRTLSRGVLLTPTLGLFSTIPLVGRTLFPRAYARLRRAFERRLLPAVPTQLHSPHEEGTAQGRGGAAFTASEKAARVAATLEIMGLTRRFAPLVVMLGHGSISVNNPHQSAYDCGACGGRHGGPNARLFAAMANDREVRAQLRERGIDIPDGTFFLGGMNNTTTEEIVLYDDHLAPASHRGEIAALKDALGEARKRHAHERCRRFASAPARLSPEQALAHVEARAVDLSEARPELGHATNAVCVIGRRELTRGLFLDRRVFLVSYDPTQDPSGAILERVLLSAGPVGAGINLEYYFSRVDNLRYGAGTKLPHNLASLLGVMDGALSDLRTGLPKQMIEIHEPVRMLTVVETSTETAAAICARQPALRELIHNGWIQLACLDPATGQIARFTRGAFAPFTPPERPLPEVARSLDWYAGKSGFVPPAIIRATPSRPSLEIADHAA</sequence>
<keyword id="KW-0997">Cell inner membrane</keyword>
<keyword id="KW-1003">Cell membrane</keyword>
<keyword id="KW-0472">Membrane</keyword>
<keyword id="KW-0479">Metal-binding</keyword>
<keyword id="KW-1185">Reference proteome</keyword>
<keyword id="KW-0813">Transport</keyword>
<keyword id="KW-0862">Zinc</keyword>
<evidence type="ECO:0000255" key="1">
    <source>
        <dbReference type="HAMAP-Rule" id="MF_01871"/>
    </source>
</evidence>
<accession>A9G4L9</accession>
<organism>
    <name type="scientific">Sorangium cellulosum (strain So ce56)</name>
    <name type="common">Polyangium cellulosum (strain So ce56)</name>
    <dbReference type="NCBI Taxonomy" id="448385"/>
    <lineage>
        <taxon>Bacteria</taxon>
        <taxon>Pseudomonadati</taxon>
        <taxon>Myxococcota</taxon>
        <taxon>Polyangia</taxon>
        <taxon>Polyangiales</taxon>
        <taxon>Polyangiaceae</taxon>
        <taxon>Sorangium</taxon>
    </lineage>
</organism>
<proteinExistence type="inferred from homology"/>
<comment type="function">
    <text evidence="1">Part of an energy-coupled inorganic carbon pump.</text>
</comment>
<comment type="cofactor">
    <cofactor evidence="1">
        <name>Zn(2+)</name>
        <dbReference type="ChEBI" id="CHEBI:29105"/>
    </cofactor>
</comment>
<comment type="subunit">
    <text evidence="1">Forms a complex with DabB.</text>
</comment>
<comment type="subcellular location">
    <subcellularLocation>
        <location evidence="1">Cell inner membrane</location>
        <topology evidence="1">Peripheral membrane protein</topology>
    </subcellularLocation>
</comment>
<comment type="similarity">
    <text evidence="1">Belongs to the inorganic carbon transporter (TC 9.A.2) DabA family.</text>
</comment>